<proteinExistence type="inferred from homology"/>
<keyword id="KW-0963">Cytoplasm</keyword>
<keyword id="KW-0396">Initiation factor</keyword>
<keyword id="KW-0648">Protein biosynthesis</keyword>
<keyword id="KW-1185">Reference proteome</keyword>
<feature type="chain" id="PRO_0000364308" description="Eukaryotic translation initiation factor 3 subunit F-2">
    <location>
        <begin position="1"/>
        <end position="288"/>
    </location>
</feature>
<feature type="domain" description="MPN" evidence="2">
    <location>
        <begin position="12"/>
        <end position="149"/>
    </location>
</feature>
<gene>
    <name evidence="1" type="primary">eIF3f2</name>
    <name evidence="1" type="synonym">eIF3-S5-2</name>
    <name type="ORF">GL16249</name>
</gene>
<accession>B4HBD2</accession>
<dbReference type="EMBL" id="CH479252">
    <property type="protein sequence ID" value="EDW38674.1"/>
    <property type="molecule type" value="Genomic_DNA"/>
</dbReference>
<dbReference type="SMR" id="B4HBD2"/>
<dbReference type="STRING" id="7234.B4HBD2"/>
<dbReference type="EnsemblMetazoa" id="FBtr0181864">
    <property type="protein sequence ID" value="FBpp0180356"/>
    <property type="gene ID" value="FBgn0153853"/>
</dbReference>
<dbReference type="EnsemblMetazoa" id="XM_002028125.2">
    <property type="protein sequence ID" value="XP_002028161.1"/>
    <property type="gene ID" value="LOC6603142"/>
</dbReference>
<dbReference type="GeneID" id="6603142"/>
<dbReference type="KEGG" id="dpe:6603142"/>
<dbReference type="CTD" id="35547"/>
<dbReference type="eggNOG" id="KOG2975">
    <property type="taxonomic scope" value="Eukaryota"/>
</dbReference>
<dbReference type="HOGENOM" id="CLU_027018_0_2_1"/>
<dbReference type="OMA" id="IEITNCF"/>
<dbReference type="OrthoDB" id="25498at2759"/>
<dbReference type="PhylomeDB" id="B4HBD2"/>
<dbReference type="Proteomes" id="UP000008744">
    <property type="component" value="Unassembled WGS sequence"/>
</dbReference>
<dbReference type="GO" id="GO:0016282">
    <property type="term" value="C:eukaryotic 43S preinitiation complex"/>
    <property type="evidence" value="ECO:0007669"/>
    <property type="project" value="UniProtKB-UniRule"/>
</dbReference>
<dbReference type="GO" id="GO:0033290">
    <property type="term" value="C:eukaryotic 48S preinitiation complex"/>
    <property type="evidence" value="ECO:0007669"/>
    <property type="project" value="UniProtKB-UniRule"/>
</dbReference>
<dbReference type="GO" id="GO:0071541">
    <property type="term" value="C:eukaryotic translation initiation factor 3 complex, eIF3m"/>
    <property type="evidence" value="ECO:0007669"/>
    <property type="project" value="TreeGrafter"/>
</dbReference>
<dbReference type="GO" id="GO:0008237">
    <property type="term" value="F:metallopeptidase activity"/>
    <property type="evidence" value="ECO:0007669"/>
    <property type="project" value="InterPro"/>
</dbReference>
<dbReference type="GO" id="GO:0003743">
    <property type="term" value="F:translation initiation factor activity"/>
    <property type="evidence" value="ECO:0007669"/>
    <property type="project" value="UniProtKB-UniRule"/>
</dbReference>
<dbReference type="GO" id="GO:0031369">
    <property type="term" value="F:translation initiation factor binding"/>
    <property type="evidence" value="ECO:0007669"/>
    <property type="project" value="InterPro"/>
</dbReference>
<dbReference type="GO" id="GO:0001732">
    <property type="term" value="P:formation of cytoplasmic translation initiation complex"/>
    <property type="evidence" value="ECO:0007669"/>
    <property type="project" value="UniProtKB-UniRule"/>
</dbReference>
<dbReference type="CDD" id="cd08064">
    <property type="entry name" value="MPN_eIF3f"/>
    <property type="match status" value="1"/>
</dbReference>
<dbReference type="Gene3D" id="3.40.140.10">
    <property type="entry name" value="Cytidine Deaminase, domain 2"/>
    <property type="match status" value="1"/>
</dbReference>
<dbReference type="HAMAP" id="MF_03005">
    <property type="entry name" value="eIF3f"/>
    <property type="match status" value="1"/>
</dbReference>
<dbReference type="InterPro" id="IPR027531">
    <property type="entry name" value="eIF3f"/>
</dbReference>
<dbReference type="InterPro" id="IPR024969">
    <property type="entry name" value="EIF3F/CSN6-like_C"/>
</dbReference>
<dbReference type="InterPro" id="IPR000555">
    <property type="entry name" value="JAMM/MPN+_dom"/>
</dbReference>
<dbReference type="InterPro" id="IPR037518">
    <property type="entry name" value="MPN"/>
</dbReference>
<dbReference type="PANTHER" id="PTHR10540:SF6">
    <property type="entry name" value="EUKARYOTIC TRANSLATION INITIATION FACTOR 3 SUBUNIT F"/>
    <property type="match status" value="1"/>
</dbReference>
<dbReference type="PANTHER" id="PTHR10540">
    <property type="entry name" value="EUKARYOTIC TRANSLATION INITIATION FACTOR 3 SUBUNIT F-RELATED"/>
    <property type="match status" value="1"/>
</dbReference>
<dbReference type="Pfam" id="PF01398">
    <property type="entry name" value="JAB"/>
    <property type="match status" value="1"/>
</dbReference>
<dbReference type="Pfam" id="PF13012">
    <property type="entry name" value="MitMem_reg"/>
    <property type="match status" value="1"/>
</dbReference>
<dbReference type="SMART" id="SM00232">
    <property type="entry name" value="JAB_MPN"/>
    <property type="match status" value="1"/>
</dbReference>
<dbReference type="PROSITE" id="PS50249">
    <property type="entry name" value="MPN"/>
    <property type="match status" value="1"/>
</dbReference>
<name>EI3F2_DROPE</name>
<sequence>MSLSNFNLQSKVLLHPLVLFQIIDAYERRAKDVPEVLGTLLGIVAGKTGRIEITNCFSVVHRMHGDNNCHIDLDLKYDNDMLELAQIAYPQEKVVGWFSTGKAVSAAAVELHEYYERQCHSGQPLHLLMDTSLRGQRMNTRIFCAVATGVPGGTKGLMFSLLPMDIYFGSPDIVAMRHMGRQCALPPKEAGRLLPELEQVVDATKDIQQKLDLVLRYINDILNRKRRPDNTVGRALHDVLTSVPMVEAERFRHMFNTNMRDLLMSLTLSSMIKVQLQLSERLSNMVDA</sequence>
<comment type="function">
    <text evidence="1">Component of the eukaryotic translation initiation factor 3 (eIF-3) complex, which is involved in protein synthesis of a specialized repertoire of mRNAs and, together with other initiation factors, stimulates binding of mRNA and methionyl-tRNAi to the 40S ribosome. The eIF-3 complex specifically targets and initiates translation of a subset of mRNAs involved in cell proliferation.</text>
</comment>
<comment type="subunit">
    <text evidence="1">Component of the eukaryotic translation initiation factor 3 (eIF-3) complex. The eIF-3 complex interacts with pix.</text>
</comment>
<comment type="subcellular location">
    <subcellularLocation>
        <location evidence="1">Cytoplasm</location>
    </subcellularLocation>
</comment>
<comment type="similarity">
    <text evidence="1">Belongs to the eIF-3 subunit F family.</text>
</comment>
<reference key="1">
    <citation type="journal article" date="2007" name="Nature">
        <title>Evolution of genes and genomes on the Drosophila phylogeny.</title>
        <authorList>
            <consortium name="Drosophila 12 genomes consortium"/>
        </authorList>
    </citation>
    <scope>NUCLEOTIDE SEQUENCE [LARGE SCALE GENOMIC DNA]</scope>
    <source>
        <strain>MSH-3 / Tucson 14011-0111.49</strain>
    </source>
</reference>
<protein>
    <recommendedName>
        <fullName evidence="1">Eukaryotic translation initiation factor 3 subunit F-2</fullName>
        <shortName evidence="1">eIF3f-2</shortName>
    </recommendedName>
    <alternativeName>
        <fullName evidence="1">Eukaryotic translation initiation factor 3 subunit 5-2</fullName>
    </alternativeName>
</protein>
<evidence type="ECO:0000255" key="1">
    <source>
        <dbReference type="HAMAP-Rule" id="MF_03005"/>
    </source>
</evidence>
<evidence type="ECO:0000255" key="2">
    <source>
        <dbReference type="PROSITE-ProRule" id="PRU01182"/>
    </source>
</evidence>
<organism>
    <name type="scientific">Drosophila persimilis</name>
    <name type="common">Fruit fly</name>
    <dbReference type="NCBI Taxonomy" id="7234"/>
    <lineage>
        <taxon>Eukaryota</taxon>
        <taxon>Metazoa</taxon>
        <taxon>Ecdysozoa</taxon>
        <taxon>Arthropoda</taxon>
        <taxon>Hexapoda</taxon>
        <taxon>Insecta</taxon>
        <taxon>Pterygota</taxon>
        <taxon>Neoptera</taxon>
        <taxon>Endopterygota</taxon>
        <taxon>Diptera</taxon>
        <taxon>Brachycera</taxon>
        <taxon>Muscomorpha</taxon>
        <taxon>Ephydroidea</taxon>
        <taxon>Drosophilidae</taxon>
        <taxon>Drosophila</taxon>
        <taxon>Sophophora</taxon>
    </lineage>
</organism>